<proteinExistence type="inferred from homology"/>
<accession>A1JIG4</accession>
<dbReference type="EC" id="4.2.1.17" evidence="1"/>
<dbReference type="EC" id="5.1.2.3" evidence="1"/>
<dbReference type="EC" id="5.3.3.8" evidence="1"/>
<dbReference type="EC" id="1.1.1.35" evidence="1"/>
<dbReference type="EMBL" id="AM286415">
    <property type="protein sequence ID" value="CAL10402.1"/>
    <property type="molecule type" value="Genomic_DNA"/>
</dbReference>
<dbReference type="RefSeq" id="WP_011815377.1">
    <property type="nucleotide sequence ID" value="NC_008800.1"/>
</dbReference>
<dbReference type="RefSeq" id="YP_001004653.1">
    <property type="nucleotide sequence ID" value="NC_008800.1"/>
</dbReference>
<dbReference type="SMR" id="A1JIG4"/>
<dbReference type="KEGG" id="yen:YE0268"/>
<dbReference type="PATRIC" id="fig|393305.7.peg.360"/>
<dbReference type="eggNOG" id="COG1024">
    <property type="taxonomic scope" value="Bacteria"/>
</dbReference>
<dbReference type="eggNOG" id="COG1250">
    <property type="taxonomic scope" value="Bacteria"/>
</dbReference>
<dbReference type="HOGENOM" id="CLU_009834_16_3_6"/>
<dbReference type="OrthoDB" id="5389341at2"/>
<dbReference type="UniPathway" id="UPA00659"/>
<dbReference type="Proteomes" id="UP000000642">
    <property type="component" value="Chromosome"/>
</dbReference>
<dbReference type="GO" id="GO:0036125">
    <property type="term" value="C:fatty acid beta-oxidation multienzyme complex"/>
    <property type="evidence" value="ECO:0007669"/>
    <property type="project" value="InterPro"/>
</dbReference>
<dbReference type="GO" id="GO:0008692">
    <property type="term" value="F:3-hydroxybutyryl-CoA epimerase activity"/>
    <property type="evidence" value="ECO:0007669"/>
    <property type="project" value="UniProtKB-UniRule"/>
</dbReference>
<dbReference type="GO" id="GO:0004165">
    <property type="term" value="F:delta(3)-delta(2)-enoyl-CoA isomerase activity"/>
    <property type="evidence" value="ECO:0007669"/>
    <property type="project" value="UniProtKB-UniRule"/>
</dbReference>
<dbReference type="GO" id="GO:0004300">
    <property type="term" value="F:enoyl-CoA hydratase activity"/>
    <property type="evidence" value="ECO:0007669"/>
    <property type="project" value="UniProtKB-UniRule"/>
</dbReference>
<dbReference type="GO" id="GO:0016509">
    <property type="term" value="F:long-chain-3-hydroxyacyl-CoA dehydrogenase activity"/>
    <property type="evidence" value="ECO:0007669"/>
    <property type="project" value="TreeGrafter"/>
</dbReference>
<dbReference type="GO" id="GO:0070403">
    <property type="term" value="F:NAD+ binding"/>
    <property type="evidence" value="ECO:0007669"/>
    <property type="project" value="InterPro"/>
</dbReference>
<dbReference type="GO" id="GO:0006635">
    <property type="term" value="P:fatty acid beta-oxidation"/>
    <property type="evidence" value="ECO:0007669"/>
    <property type="project" value="UniProtKB-UniRule"/>
</dbReference>
<dbReference type="CDD" id="cd06558">
    <property type="entry name" value="crotonase-like"/>
    <property type="match status" value="1"/>
</dbReference>
<dbReference type="FunFam" id="1.10.1040.50:FF:000001">
    <property type="entry name" value="Fatty acid oxidation complex subunit alpha"/>
    <property type="match status" value="1"/>
</dbReference>
<dbReference type="FunFam" id="3.90.226.10:FF:000018">
    <property type="entry name" value="Fatty acid oxidation complex subunit alpha"/>
    <property type="match status" value="1"/>
</dbReference>
<dbReference type="FunFam" id="3.40.50.720:FF:000009">
    <property type="entry name" value="Fatty oxidation complex, alpha subunit"/>
    <property type="match status" value="1"/>
</dbReference>
<dbReference type="Gene3D" id="1.10.1040.50">
    <property type="match status" value="1"/>
</dbReference>
<dbReference type="Gene3D" id="3.90.226.10">
    <property type="entry name" value="2-enoyl-CoA Hydratase, Chain A, domain 1"/>
    <property type="match status" value="1"/>
</dbReference>
<dbReference type="Gene3D" id="3.40.50.720">
    <property type="entry name" value="NAD(P)-binding Rossmann-like Domain"/>
    <property type="match status" value="1"/>
</dbReference>
<dbReference type="HAMAP" id="MF_01621">
    <property type="entry name" value="FadB"/>
    <property type="match status" value="1"/>
</dbReference>
<dbReference type="InterPro" id="IPR006180">
    <property type="entry name" value="3-OHacyl-CoA_DH_CS"/>
</dbReference>
<dbReference type="InterPro" id="IPR006176">
    <property type="entry name" value="3-OHacyl-CoA_DH_NAD-bd"/>
</dbReference>
<dbReference type="InterPro" id="IPR006108">
    <property type="entry name" value="3HC_DH_C"/>
</dbReference>
<dbReference type="InterPro" id="IPR008927">
    <property type="entry name" value="6-PGluconate_DH-like_C_sf"/>
</dbReference>
<dbReference type="InterPro" id="IPR029045">
    <property type="entry name" value="ClpP/crotonase-like_dom_sf"/>
</dbReference>
<dbReference type="InterPro" id="IPR018376">
    <property type="entry name" value="Enoyl-CoA_hyd/isom_CS"/>
</dbReference>
<dbReference type="InterPro" id="IPR001753">
    <property type="entry name" value="Enoyl-CoA_hydra/iso"/>
</dbReference>
<dbReference type="InterPro" id="IPR050136">
    <property type="entry name" value="FA_oxidation_alpha_subunit"/>
</dbReference>
<dbReference type="InterPro" id="IPR012799">
    <property type="entry name" value="FadB"/>
</dbReference>
<dbReference type="InterPro" id="IPR036291">
    <property type="entry name" value="NAD(P)-bd_dom_sf"/>
</dbReference>
<dbReference type="NCBIfam" id="TIGR02437">
    <property type="entry name" value="FadB"/>
    <property type="match status" value="1"/>
</dbReference>
<dbReference type="NCBIfam" id="NF008727">
    <property type="entry name" value="PRK11730.1"/>
    <property type="match status" value="1"/>
</dbReference>
<dbReference type="PANTHER" id="PTHR43612">
    <property type="entry name" value="TRIFUNCTIONAL ENZYME SUBUNIT ALPHA"/>
    <property type="match status" value="1"/>
</dbReference>
<dbReference type="PANTHER" id="PTHR43612:SF3">
    <property type="entry name" value="TRIFUNCTIONAL ENZYME SUBUNIT ALPHA, MITOCHONDRIAL"/>
    <property type="match status" value="1"/>
</dbReference>
<dbReference type="Pfam" id="PF00725">
    <property type="entry name" value="3HCDH"/>
    <property type="match status" value="2"/>
</dbReference>
<dbReference type="Pfam" id="PF02737">
    <property type="entry name" value="3HCDH_N"/>
    <property type="match status" value="1"/>
</dbReference>
<dbReference type="Pfam" id="PF00378">
    <property type="entry name" value="ECH_1"/>
    <property type="match status" value="1"/>
</dbReference>
<dbReference type="SUPFAM" id="SSF48179">
    <property type="entry name" value="6-phosphogluconate dehydrogenase C-terminal domain-like"/>
    <property type="match status" value="2"/>
</dbReference>
<dbReference type="SUPFAM" id="SSF52096">
    <property type="entry name" value="ClpP/crotonase"/>
    <property type="match status" value="1"/>
</dbReference>
<dbReference type="SUPFAM" id="SSF51735">
    <property type="entry name" value="NAD(P)-binding Rossmann-fold domains"/>
    <property type="match status" value="1"/>
</dbReference>
<dbReference type="PROSITE" id="PS00067">
    <property type="entry name" value="3HCDH"/>
    <property type="match status" value="1"/>
</dbReference>
<dbReference type="PROSITE" id="PS00166">
    <property type="entry name" value="ENOYL_COA_HYDRATASE"/>
    <property type="match status" value="1"/>
</dbReference>
<feature type="chain" id="PRO_1000069584" description="Fatty acid oxidation complex subunit alpha">
    <location>
        <begin position="1"/>
        <end position="729"/>
    </location>
</feature>
<feature type="region of interest" description="Enoyl-CoA hydratase/isomerase" evidence="1">
    <location>
        <begin position="1"/>
        <end position="189"/>
    </location>
</feature>
<feature type="region of interest" description="3-hydroxyacyl-CoA dehydrogenase" evidence="1">
    <location>
        <begin position="311"/>
        <end position="729"/>
    </location>
</feature>
<feature type="active site" description="For 3-hydroxyacyl-CoA dehydrogenase activity" evidence="1">
    <location>
        <position position="450"/>
    </location>
</feature>
<feature type="binding site" evidence="1">
    <location>
        <position position="296"/>
    </location>
    <ligand>
        <name>substrate</name>
    </ligand>
</feature>
<feature type="binding site" evidence="1">
    <location>
        <position position="324"/>
    </location>
    <ligand>
        <name>NAD(+)</name>
        <dbReference type="ChEBI" id="CHEBI:57540"/>
    </ligand>
</feature>
<feature type="binding site" evidence="1">
    <location>
        <position position="343"/>
    </location>
    <ligand>
        <name>NAD(+)</name>
        <dbReference type="ChEBI" id="CHEBI:57540"/>
    </ligand>
</feature>
<feature type="binding site" evidence="1">
    <location>
        <begin position="400"/>
        <end position="402"/>
    </location>
    <ligand>
        <name>NAD(+)</name>
        <dbReference type="ChEBI" id="CHEBI:57540"/>
    </ligand>
</feature>
<feature type="binding site" evidence="1">
    <location>
        <position position="407"/>
    </location>
    <ligand>
        <name>NAD(+)</name>
        <dbReference type="ChEBI" id="CHEBI:57540"/>
    </ligand>
</feature>
<feature type="binding site" evidence="1">
    <location>
        <position position="429"/>
    </location>
    <ligand>
        <name>NAD(+)</name>
        <dbReference type="ChEBI" id="CHEBI:57540"/>
    </ligand>
</feature>
<feature type="binding site" evidence="1">
    <location>
        <position position="453"/>
    </location>
    <ligand>
        <name>NAD(+)</name>
        <dbReference type="ChEBI" id="CHEBI:57540"/>
    </ligand>
</feature>
<feature type="binding site" evidence="1">
    <location>
        <position position="500"/>
    </location>
    <ligand>
        <name>substrate</name>
    </ligand>
</feature>
<feature type="binding site" evidence="1">
    <location>
        <position position="660"/>
    </location>
    <ligand>
        <name>substrate</name>
    </ligand>
</feature>
<feature type="site" description="Important for catalytic activity" evidence="1">
    <location>
        <position position="119"/>
    </location>
</feature>
<feature type="site" description="Important for catalytic activity" evidence="1">
    <location>
        <position position="139"/>
    </location>
</feature>
<gene>
    <name evidence="1" type="primary">fadB</name>
    <name type="ordered locus">YE0268</name>
</gene>
<reference key="1">
    <citation type="journal article" date="2006" name="PLoS Genet.">
        <title>The complete genome sequence and comparative genome analysis of the high pathogenicity Yersinia enterocolitica strain 8081.</title>
        <authorList>
            <person name="Thomson N.R."/>
            <person name="Howard S."/>
            <person name="Wren B.W."/>
            <person name="Holden M.T.G."/>
            <person name="Crossman L."/>
            <person name="Challis G.L."/>
            <person name="Churcher C."/>
            <person name="Mungall K."/>
            <person name="Brooks K."/>
            <person name="Chillingworth T."/>
            <person name="Feltwell T."/>
            <person name="Abdellah Z."/>
            <person name="Hauser H."/>
            <person name="Jagels K."/>
            <person name="Maddison M."/>
            <person name="Moule S."/>
            <person name="Sanders M."/>
            <person name="Whitehead S."/>
            <person name="Quail M.A."/>
            <person name="Dougan G."/>
            <person name="Parkhill J."/>
            <person name="Prentice M.B."/>
        </authorList>
    </citation>
    <scope>NUCLEOTIDE SEQUENCE [LARGE SCALE GENOMIC DNA]</scope>
    <source>
        <strain>NCTC 13174 / 8081</strain>
    </source>
</reference>
<organism>
    <name type="scientific">Yersinia enterocolitica serotype O:8 / biotype 1B (strain NCTC 13174 / 8081)</name>
    <dbReference type="NCBI Taxonomy" id="393305"/>
    <lineage>
        <taxon>Bacteria</taxon>
        <taxon>Pseudomonadati</taxon>
        <taxon>Pseudomonadota</taxon>
        <taxon>Gammaproteobacteria</taxon>
        <taxon>Enterobacterales</taxon>
        <taxon>Yersiniaceae</taxon>
        <taxon>Yersinia</taxon>
    </lineage>
</organism>
<sequence>MLYQSETLQLHWLENGIAELVFDAPGSVNKLDTQTVANLGEALVVLEKQSELKGLLLRSAKAAFIVGADITEFLSLFNEPPEKLHQWLVFANDIFNRLEDLPVPTIAAINGYALGGGCECILATDFRVASPEARIGLPETKLGIMPGFGGSVRLPRLLGADSALEIIAAGKDIIAKDALKVGLVDAVVAPEKLVDAALSILNQAIDGKLDWQAARRPKLEPLKLNPTEAAMCFTIAKGMVMQVAGKHYPAPLTAVKTIEAAAKFGRAEALILETNSFVPLAGSNEARALVGIFLNDQYVKGQAKKLSKGVSAPKQAAVLGAGIMGGGIAYQSALKGVPVIMKDINDKSLTLGMNEAAKLLNKQLERGKIDGLKMANILATIQPTLDYAGIERAQVIVEAVVENPKVKAAVLAEVETLIGEETVLASNTSTIPIDQLAKSLKRPENFCGMHFFNPVHRMPLVEIIRGTKTSDKTIAAVVAYATQMGKTPIVVNDCPGFFVNRVLFPYLAGFGMLVRDGADFRQIDKVMEKQFGWPMGPAYLLDVVGIDTAHHAQAVMAVGFPERMNKDYRDAVDVMFDNQRFGQKNGQGFYRYTQDTKGKPRKENDEQVDALLAQVSQPLQKFSDDDIIARTMIPMINEVVRCLEEGIIASPAEGDMALVYGLGFPPFHGGVFRYLDTIGSANYVEMAQRYTHLGALYQVPPGLRAKAEHNESYYPVAAALLDVSISQPA</sequence>
<keyword id="KW-0276">Fatty acid metabolism</keyword>
<keyword id="KW-0413">Isomerase</keyword>
<keyword id="KW-0442">Lipid degradation</keyword>
<keyword id="KW-0443">Lipid metabolism</keyword>
<keyword id="KW-0456">Lyase</keyword>
<keyword id="KW-0511">Multifunctional enzyme</keyword>
<keyword id="KW-0520">NAD</keyword>
<keyword id="KW-0560">Oxidoreductase</keyword>
<comment type="function">
    <text evidence="1">Involved in the aerobic and anaerobic degradation of long-chain fatty acids via beta-oxidation cycle. Catalyzes the formation of 3-oxoacyl-CoA from enoyl-CoA via L-3-hydroxyacyl-CoA. It can also use D-3-hydroxyacyl-CoA and cis-3-enoyl-CoA as substrate.</text>
</comment>
<comment type="catalytic activity">
    <reaction evidence="1">
        <text>a (3S)-3-hydroxyacyl-CoA + NAD(+) = a 3-oxoacyl-CoA + NADH + H(+)</text>
        <dbReference type="Rhea" id="RHEA:22432"/>
        <dbReference type="ChEBI" id="CHEBI:15378"/>
        <dbReference type="ChEBI" id="CHEBI:57318"/>
        <dbReference type="ChEBI" id="CHEBI:57540"/>
        <dbReference type="ChEBI" id="CHEBI:57945"/>
        <dbReference type="ChEBI" id="CHEBI:90726"/>
        <dbReference type="EC" id="1.1.1.35"/>
    </reaction>
</comment>
<comment type="catalytic activity">
    <reaction evidence="1">
        <text>a (3S)-3-hydroxyacyl-CoA = a (2E)-enoyl-CoA + H2O</text>
        <dbReference type="Rhea" id="RHEA:16105"/>
        <dbReference type="ChEBI" id="CHEBI:15377"/>
        <dbReference type="ChEBI" id="CHEBI:57318"/>
        <dbReference type="ChEBI" id="CHEBI:58856"/>
        <dbReference type="EC" id="4.2.1.17"/>
    </reaction>
</comment>
<comment type="catalytic activity">
    <reaction evidence="1">
        <text>a 4-saturated-(3S)-3-hydroxyacyl-CoA = a (3E)-enoyl-CoA + H2O</text>
        <dbReference type="Rhea" id="RHEA:20724"/>
        <dbReference type="ChEBI" id="CHEBI:15377"/>
        <dbReference type="ChEBI" id="CHEBI:58521"/>
        <dbReference type="ChEBI" id="CHEBI:137480"/>
        <dbReference type="EC" id="4.2.1.17"/>
    </reaction>
</comment>
<comment type="catalytic activity">
    <reaction evidence="1">
        <text>(3S)-3-hydroxybutanoyl-CoA = (3R)-3-hydroxybutanoyl-CoA</text>
        <dbReference type="Rhea" id="RHEA:21760"/>
        <dbReference type="ChEBI" id="CHEBI:57315"/>
        <dbReference type="ChEBI" id="CHEBI:57316"/>
        <dbReference type="EC" id="5.1.2.3"/>
    </reaction>
</comment>
<comment type="catalytic activity">
    <reaction evidence="1">
        <text>a (3Z)-enoyl-CoA = a 4-saturated (2E)-enoyl-CoA</text>
        <dbReference type="Rhea" id="RHEA:45900"/>
        <dbReference type="ChEBI" id="CHEBI:85097"/>
        <dbReference type="ChEBI" id="CHEBI:85489"/>
        <dbReference type="EC" id="5.3.3.8"/>
    </reaction>
</comment>
<comment type="catalytic activity">
    <reaction evidence="1">
        <text>a (3E)-enoyl-CoA = a 4-saturated (2E)-enoyl-CoA</text>
        <dbReference type="Rhea" id="RHEA:45228"/>
        <dbReference type="ChEBI" id="CHEBI:58521"/>
        <dbReference type="ChEBI" id="CHEBI:85097"/>
        <dbReference type="EC" id="5.3.3.8"/>
    </reaction>
</comment>
<comment type="pathway">
    <text evidence="1">Lipid metabolism; fatty acid beta-oxidation.</text>
</comment>
<comment type="subunit">
    <text evidence="1">Heterotetramer of two alpha chains (FadB) and two beta chains (FadA).</text>
</comment>
<comment type="similarity">
    <text evidence="1">In the N-terminal section; belongs to the enoyl-CoA hydratase/isomerase family.</text>
</comment>
<comment type="similarity">
    <text evidence="1">In the C-terminal section; belongs to the 3-hydroxyacyl-CoA dehydrogenase family.</text>
</comment>
<name>FADB_YERE8</name>
<protein>
    <recommendedName>
        <fullName evidence="1">Fatty acid oxidation complex subunit alpha</fullName>
    </recommendedName>
    <domain>
        <recommendedName>
            <fullName evidence="1">Enoyl-CoA hydratase/Delta(3)-cis-Delta(2)-trans-enoyl-CoA isomerase/3-hydroxybutyryl-CoA epimerase</fullName>
            <ecNumber evidence="1">4.2.1.17</ecNumber>
            <ecNumber evidence="1">5.1.2.3</ecNumber>
            <ecNumber evidence="1">5.3.3.8</ecNumber>
        </recommendedName>
    </domain>
    <domain>
        <recommendedName>
            <fullName evidence="1">3-hydroxyacyl-CoA dehydrogenase</fullName>
            <ecNumber evidence="1">1.1.1.35</ecNumber>
        </recommendedName>
    </domain>
</protein>
<evidence type="ECO:0000255" key="1">
    <source>
        <dbReference type="HAMAP-Rule" id="MF_01621"/>
    </source>
</evidence>